<gene>
    <name evidence="1" type="primary">kdsA</name>
    <name type="ordered locus">mma_0532</name>
</gene>
<accession>A6SVC5</accession>
<reference key="1">
    <citation type="journal article" date="2007" name="PLoS Genet.">
        <title>Genome analysis of Minibacterium massiliensis highlights the convergent evolution of water-living bacteria.</title>
        <authorList>
            <person name="Audic S."/>
            <person name="Robert C."/>
            <person name="Campagna B."/>
            <person name="Parinello H."/>
            <person name="Claverie J.-M."/>
            <person name="Raoult D."/>
            <person name="Drancourt M."/>
        </authorList>
    </citation>
    <scope>NUCLEOTIDE SEQUENCE [LARGE SCALE GENOMIC DNA]</scope>
    <source>
        <strain>Marseille</strain>
    </source>
</reference>
<feature type="chain" id="PRO_1000003337" description="2-dehydro-3-deoxyphosphooctonate aldolase">
    <location>
        <begin position="1"/>
        <end position="281"/>
    </location>
</feature>
<sequence>MININGEIKVDNAAPFVLFGGINVLESRDLAMRSCEEYVRVTGKLGIPYVFKASFDKANRSSIHSYRGPGLEEGLRIFEDVKKTFGVPLITDVHEPYQAKIAAEVIDVLQLPAFLARQTDLVVALAQTGRVINIKKPQFLSPPQMLNIVEKFREAGNDKLILCDRGTCFGYDNLVVDMLGFGVMKKVTGNLPIIFDVTHALQQRDSLGTASGGRREQVADLARAGMGVGLAGLFLEAHPDPKVAKCDGPSALPLDKLEPFLAQLKQLDDLVKSFAPLDIEA</sequence>
<proteinExistence type="inferred from homology"/>
<name>KDSA_JANMA</name>
<comment type="catalytic activity">
    <reaction evidence="1">
        <text>D-arabinose 5-phosphate + phosphoenolpyruvate + H2O = 3-deoxy-alpha-D-manno-2-octulosonate-8-phosphate + phosphate</text>
        <dbReference type="Rhea" id="RHEA:14053"/>
        <dbReference type="ChEBI" id="CHEBI:15377"/>
        <dbReference type="ChEBI" id="CHEBI:43474"/>
        <dbReference type="ChEBI" id="CHEBI:57693"/>
        <dbReference type="ChEBI" id="CHEBI:58702"/>
        <dbReference type="ChEBI" id="CHEBI:85985"/>
        <dbReference type="EC" id="2.5.1.55"/>
    </reaction>
</comment>
<comment type="pathway">
    <text evidence="1">Carbohydrate biosynthesis; 3-deoxy-D-manno-octulosonate biosynthesis; 3-deoxy-D-manno-octulosonate from D-ribulose 5-phosphate: step 2/3.</text>
</comment>
<comment type="pathway">
    <text evidence="1">Bacterial outer membrane biogenesis; lipopolysaccharide biosynthesis.</text>
</comment>
<comment type="subcellular location">
    <subcellularLocation>
        <location evidence="1">Cytoplasm</location>
    </subcellularLocation>
</comment>
<comment type="similarity">
    <text evidence="1">Belongs to the KdsA family.</text>
</comment>
<keyword id="KW-0963">Cytoplasm</keyword>
<keyword id="KW-0448">Lipopolysaccharide biosynthesis</keyword>
<keyword id="KW-0808">Transferase</keyword>
<evidence type="ECO:0000255" key="1">
    <source>
        <dbReference type="HAMAP-Rule" id="MF_00056"/>
    </source>
</evidence>
<dbReference type="EC" id="2.5.1.55" evidence="1"/>
<dbReference type="EMBL" id="CP000269">
    <property type="protein sequence ID" value="ABR89026.1"/>
    <property type="molecule type" value="Genomic_DNA"/>
</dbReference>
<dbReference type="RefSeq" id="WP_012078396.1">
    <property type="nucleotide sequence ID" value="NC_009659.1"/>
</dbReference>
<dbReference type="SMR" id="A6SVC5"/>
<dbReference type="STRING" id="375286.mma_0532"/>
<dbReference type="KEGG" id="mms:mma_0532"/>
<dbReference type="eggNOG" id="COG2877">
    <property type="taxonomic scope" value="Bacteria"/>
</dbReference>
<dbReference type="HOGENOM" id="CLU_036666_0_0_4"/>
<dbReference type="OrthoDB" id="9776934at2"/>
<dbReference type="UniPathway" id="UPA00030"/>
<dbReference type="UniPathway" id="UPA00357">
    <property type="reaction ID" value="UER00474"/>
</dbReference>
<dbReference type="Proteomes" id="UP000006388">
    <property type="component" value="Chromosome"/>
</dbReference>
<dbReference type="GO" id="GO:0005737">
    <property type="term" value="C:cytoplasm"/>
    <property type="evidence" value="ECO:0007669"/>
    <property type="project" value="UniProtKB-SubCell"/>
</dbReference>
<dbReference type="GO" id="GO:0008676">
    <property type="term" value="F:3-deoxy-8-phosphooctulonate synthase activity"/>
    <property type="evidence" value="ECO:0007669"/>
    <property type="project" value="UniProtKB-UniRule"/>
</dbReference>
<dbReference type="GO" id="GO:0019294">
    <property type="term" value="P:keto-3-deoxy-D-manno-octulosonic acid biosynthetic process"/>
    <property type="evidence" value="ECO:0007669"/>
    <property type="project" value="UniProtKB-UniRule"/>
</dbReference>
<dbReference type="Gene3D" id="3.20.20.70">
    <property type="entry name" value="Aldolase class I"/>
    <property type="match status" value="1"/>
</dbReference>
<dbReference type="HAMAP" id="MF_00056">
    <property type="entry name" value="KDO8P_synth"/>
    <property type="match status" value="1"/>
</dbReference>
<dbReference type="InterPro" id="IPR013785">
    <property type="entry name" value="Aldolase_TIM"/>
</dbReference>
<dbReference type="InterPro" id="IPR006218">
    <property type="entry name" value="DAHP1/KDSA"/>
</dbReference>
<dbReference type="InterPro" id="IPR006269">
    <property type="entry name" value="KDO8P_synthase"/>
</dbReference>
<dbReference type="NCBIfam" id="TIGR01362">
    <property type="entry name" value="KDO8P_synth"/>
    <property type="match status" value="1"/>
</dbReference>
<dbReference type="NCBIfam" id="NF003543">
    <property type="entry name" value="PRK05198.1"/>
    <property type="match status" value="1"/>
</dbReference>
<dbReference type="NCBIfam" id="NF009109">
    <property type="entry name" value="PRK12457.1"/>
    <property type="match status" value="1"/>
</dbReference>
<dbReference type="PANTHER" id="PTHR21057">
    <property type="entry name" value="PHOSPHO-2-DEHYDRO-3-DEOXYHEPTONATE ALDOLASE"/>
    <property type="match status" value="1"/>
</dbReference>
<dbReference type="Pfam" id="PF00793">
    <property type="entry name" value="DAHP_synth_1"/>
    <property type="match status" value="1"/>
</dbReference>
<dbReference type="SUPFAM" id="SSF51569">
    <property type="entry name" value="Aldolase"/>
    <property type="match status" value="1"/>
</dbReference>
<organism>
    <name type="scientific">Janthinobacterium sp. (strain Marseille)</name>
    <name type="common">Minibacterium massiliensis</name>
    <dbReference type="NCBI Taxonomy" id="375286"/>
    <lineage>
        <taxon>Bacteria</taxon>
        <taxon>Pseudomonadati</taxon>
        <taxon>Pseudomonadota</taxon>
        <taxon>Betaproteobacteria</taxon>
        <taxon>Burkholderiales</taxon>
        <taxon>Oxalobacteraceae</taxon>
        <taxon>Janthinobacterium</taxon>
    </lineage>
</organism>
<protein>
    <recommendedName>
        <fullName evidence="1">2-dehydro-3-deoxyphosphooctonate aldolase</fullName>
        <ecNumber evidence="1">2.5.1.55</ecNumber>
    </recommendedName>
    <alternativeName>
        <fullName evidence="1">3-deoxy-D-manno-octulosonic acid 8-phosphate synthase</fullName>
    </alternativeName>
    <alternativeName>
        <fullName evidence="1">KDO-8-phosphate synthase</fullName>
        <shortName evidence="1">KDO 8-P synthase</shortName>
        <shortName evidence="1">KDOPS</shortName>
    </alternativeName>
    <alternativeName>
        <fullName evidence="1">Phospho-2-dehydro-3-deoxyoctonate aldolase</fullName>
    </alternativeName>
</protein>